<proteinExistence type="inferred from homology"/>
<sequence>MSFYESVFIIRQDVSLNDIDKIVDDFAKIIKDNNGTIIKKEYWGLRTLAYKIGNNKKGHYYFLGLDITGNVKEELERKMKLNENIIRFLTIQADSISSEPSPILKNQSTENTPVIDVTINN</sequence>
<dbReference type="EMBL" id="AE006914">
    <property type="protein sequence ID" value="AAL02602.1"/>
    <property type="status" value="ALT_INIT"/>
    <property type="molecule type" value="Genomic_DNA"/>
</dbReference>
<dbReference type="PIR" id="H97707">
    <property type="entry name" value="H97707"/>
</dbReference>
<dbReference type="RefSeq" id="WP_010976750.1">
    <property type="nucleotide sequence ID" value="NC_003103.1"/>
</dbReference>
<dbReference type="SMR" id="Q92JK3"/>
<dbReference type="GeneID" id="928601"/>
<dbReference type="KEGG" id="rco:RC0064"/>
<dbReference type="HOGENOM" id="CLU_113441_2_0_5"/>
<dbReference type="Proteomes" id="UP000000816">
    <property type="component" value="Chromosome"/>
</dbReference>
<dbReference type="GO" id="GO:0005737">
    <property type="term" value="C:cytoplasm"/>
    <property type="evidence" value="ECO:0007669"/>
    <property type="project" value="UniProtKB-ARBA"/>
</dbReference>
<dbReference type="GO" id="GO:1990904">
    <property type="term" value="C:ribonucleoprotein complex"/>
    <property type="evidence" value="ECO:0007669"/>
    <property type="project" value="UniProtKB-KW"/>
</dbReference>
<dbReference type="GO" id="GO:0005840">
    <property type="term" value="C:ribosome"/>
    <property type="evidence" value="ECO:0007669"/>
    <property type="project" value="UniProtKB-KW"/>
</dbReference>
<dbReference type="GO" id="GO:0070181">
    <property type="term" value="F:small ribosomal subunit rRNA binding"/>
    <property type="evidence" value="ECO:0007669"/>
    <property type="project" value="TreeGrafter"/>
</dbReference>
<dbReference type="GO" id="GO:0003735">
    <property type="term" value="F:structural constituent of ribosome"/>
    <property type="evidence" value="ECO:0007669"/>
    <property type="project" value="InterPro"/>
</dbReference>
<dbReference type="GO" id="GO:0006412">
    <property type="term" value="P:translation"/>
    <property type="evidence" value="ECO:0007669"/>
    <property type="project" value="UniProtKB-UniRule"/>
</dbReference>
<dbReference type="CDD" id="cd00473">
    <property type="entry name" value="bS6"/>
    <property type="match status" value="1"/>
</dbReference>
<dbReference type="Gene3D" id="3.30.70.60">
    <property type="match status" value="1"/>
</dbReference>
<dbReference type="HAMAP" id="MF_00360">
    <property type="entry name" value="Ribosomal_bS6"/>
    <property type="match status" value="1"/>
</dbReference>
<dbReference type="InterPro" id="IPR000529">
    <property type="entry name" value="Ribosomal_bS6"/>
</dbReference>
<dbReference type="InterPro" id="IPR035980">
    <property type="entry name" value="Ribosomal_bS6_sf"/>
</dbReference>
<dbReference type="InterPro" id="IPR020814">
    <property type="entry name" value="Ribosomal_S6_plastid/chlpt"/>
</dbReference>
<dbReference type="InterPro" id="IPR014717">
    <property type="entry name" value="Transl_elong_EF1B/ribsomal_bS6"/>
</dbReference>
<dbReference type="NCBIfam" id="TIGR00166">
    <property type="entry name" value="S6"/>
    <property type="match status" value="1"/>
</dbReference>
<dbReference type="PANTHER" id="PTHR21011">
    <property type="entry name" value="MITOCHONDRIAL 28S RIBOSOMAL PROTEIN S6"/>
    <property type="match status" value="1"/>
</dbReference>
<dbReference type="PANTHER" id="PTHR21011:SF1">
    <property type="entry name" value="SMALL RIBOSOMAL SUBUNIT PROTEIN BS6M"/>
    <property type="match status" value="1"/>
</dbReference>
<dbReference type="Pfam" id="PF01250">
    <property type="entry name" value="Ribosomal_S6"/>
    <property type="match status" value="1"/>
</dbReference>
<dbReference type="SUPFAM" id="SSF54995">
    <property type="entry name" value="Ribosomal protein S6"/>
    <property type="match status" value="1"/>
</dbReference>
<accession>Q92JK3</accession>
<organism>
    <name type="scientific">Rickettsia conorii (strain ATCC VR-613 / Malish 7)</name>
    <dbReference type="NCBI Taxonomy" id="272944"/>
    <lineage>
        <taxon>Bacteria</taxon>
        <taxon>Pseudomonadati</taxon>
        <taxon>Pseudomonadota</taxon>
        <taxon>Alphaproteobacteria</taxon>
        <taxon>Rickettsiales</taxon>
        <taxon>Rickettsiaceae</taxon>
        <taxon>Rickettsieae</taxon>
        <taxon>Rickettsia</taxon>
        <taxon>spotted fever group</taxon>
    </lineage>
</organism>
<reference key="1">
    <citation type="journal article" date="2001" name="Science">
        <title>Mechanisms of evolution in Rickettsia conorii and R. prowazekii.</title>
        <authorList>
            <person name="Ogata H."/>
            <person name="Audic S."/>
            <person name="Renesto-Audiffren P."/>
            <person name="Fournier P.-E."/>
            <person name="Barbe V."/>
            <person name="Samson D."/>
            <person name="Roux V."/>
            <person name="Cossart P."/>
            <person name="Weissenbach J."/>
            <person name="Claverie J.-M."/>
            <person name="Raoult D."/>
        </authorList>
    </citation>
    <scope>NUCLEOTIDE SEQUENCE [LARGE SCALE GENOMIC DNA]</scope>
    <source>
        <strain>ATCC VR-613 / Malish 7</strain>
    </source>
</reference>
<name>RS6_RICCN</name>
<evidence type="ECO:0000255" key="1">
    <source>
        <dbReference type="HAMAP-Rule" id="MF_00360"/>
    </source>
</evidence>
<evidence type="ECO:0000305" key="2"/>
<feature type="chain" id="PRO_0000176828" description="Small ribosomal subunit protein bS6">
    <location>
        <begin position="1"/>
        <end position="121"/>
    </location>
</feature>
<protein>
    <recommendedName>
        <fullName evidence="1">Small ribosomal subunit protein bS6</fullName>
    </recommendedName>
    <alternativeName>
        <fullName evidence="2">30S ribosomal protein S6</fullName>
    </alternativeName>
</protein>
<gene>
    <name evidence="1" type="primary">rpsF</name>
    <name type="ordered locus">RC0064</name>
</gene>
<comment type="function">
    <text evidence="1">Binds together with bS18 to 16S ribosomal RNA.</text>
</comment>
<comment type="similarity">
    <text evidence="1">Belongs to the bacterial ribosomal protein bS6 family.</text>
</comment>
<comment type="sequence caution" evidence="2">
    <conflict type="erroneous initiation">
        <sequence resource="EMBL-CDS" id="AAL02602"/>
    </conflict>
</comment>
<keyword id="KW-0687">Ribonucleoprotein</keyword>
<keyword id="KW-0689">Ribosomal protein</keyword>
<keyword id="KW-0694">RNA-binding</keyword>
<keyword id="KW-0699">rRNA-binding</keyword>